<evidence type="ECO:0000255" key="1">
    <source>
        <dbReference type="HAMAP-Rule" id="MF_00019"/>
    </source>
</evidence>
<sequence>MINIAIDAMGGDFGEKPIIEGVLKALEAKPFNAILVGNSKILKPLIPKKLEQYIQYEEASEIFSMNGNATDALKNKETTIYKAINLLKEKKVDAVVSAGHSGASMSLATLRLGRLKGISRPAIATLMPNIVNRTLLLDVGANTDCKAENLFQFAIMGEVYAREIMQIQKPRLALLSNGEEECKGNELTKESHQLMKKIPNFIGNAEGRDIFNGEIDVLVCDGFDGNVILKACEGVATAIFQLLKNEVKQSFISKIGALLMKSSFKKLKKHTDWQEYGGAPLLGVNGCVIISHGKSDSRAIKNAIFQAINFSQSHINELIENELGKYNA</sequence>
<protein>
    <recommendedName>
        <fullName evidence="1">Phosphate acyltransferase</fullName>
        <ecNumber evidence="1">2.3.1.274</ecNumber>
    </recommendedName>
    <alternativeName>
        <fullName evidence="1">Acyl-ACP phosphotransacylase</fullName>
    </alternativeName>
    <alternativeName>
        <fullName evidence="1">Acyl-[acyl-carrier-protein]--phosphate acyltransferase</fullName>
    </alternativeName>
    <alternativeName>
        <fullName evidence="1">Phosphate-acyl-ACP acyltransferase</fullName>
    </alternativeName>
</protein>
<gene>
    <name evidence="1" type="primary">plsX</name>
    <name type="ordered locus">CJE0374</name>
</gene>
<organism>
    <name type="scientific">Campylobacter jejuni (strain RM1221)</name>
    <dbReference type="NCBI Taxonomy" id="195099"/>
    <lineage>
        <taxon>Bacteria</taxon>
        <taxon>Pseudomonadati</taxon>
        <taxon>Campylobacterota</taxon>
        <taxon>Epsilonproteobacteria</taxon>
        <taxon>Campylobacterales</taxon>
        <taxon>Campylobacteraceae</taxon>
        <taxon>Campylobacter</taxon>
    </lineage>
</organism>
<dbReference type="EC" id="2.3.1.274" evidence="1"/>
<dbReference type="EMBL" id="CP000025">
    <property type="protein sequence ID" value="AAW34963.1"/>
    <property type="molecule type" value="Genomic_DNA"/>
</dbReference>
<dbReference type="RefSeq" id="WP_002860304.1">
    <property type="nucleotide sequence ID" value="NC_003912.7"/>
</dbReference>
<dbReference type="SMR" id="Q5HWE2"/>
<dbReference type="KEGG" id="cjr:CJE0374"/>
<dbReference type="HOGENOM" id="CLU_039379_1_1_7"/>
<dbReference type="UniPathway" id="UPA00085"/>
<dbReference type="GO" id="GO:0005737">
    <property type="term" value="C:cytoplasm"/>
    <property type="evidence" value="ECO:0007669"/>
    <property type="project" value="UniProtKB-SubCell"/>
</dbReference>
<dbReference type="GO" id="GO:0043811">
    <property type="term" value="F:phosphate:acyl-[acyl carrier protein] acyltransferase activity"/>
    <property type="evidence" value="ECO:0007669"/>
    <property type="project" value="UniProtKB-UniRule"/>
</dbReference>
<dbReference type="GO" id="GO:0006633">
    <property type="term" value="P:fatty acid biosynthetic process"/>
    <property type="evidence" value="ECO:0007669"/>
    <property type="project" value="UniProtKB-UniRule"/>
</dbReference>
<dbReference type="GO" id="GO:0008654">
    <property type="term" value="P:phospholipid biosynthetic process"/>
    <property type="evidence" value="ECO:0007669"/>
    <property type="project" value="UniProtKB-KW"/>
</dbReference>
<dbReference type="Gene3D" id="3.40.718.10">
    <property type="entry name" value="Isopropylmalate Dehydrogenase"/>
    <property type="match status" value="1"/>
</dbReference>
<dbReference type="HAMAP" id="MF_00019">
    <property type="entry name" value="PlsX"/>
    <property type="match status" value="1"/>
</dbReference>
<dbReference type="InterPro" id="IPR003664">
    <property type="entry name" value="FA_synthesis"/>
</dbReference>
<dbReference type="InterPro" id="IPR012281">
    <property type="entry name" value="Phospholipid_synth_PlsX-like"/>
</dbReference>
<dbReference type="NCBIfam" id="TIGR00182">
    <property type="entry name" value="plsX"/>
    <property type="match status" value="1"/>
</dbReference>
<dbReference type="PANTHER" id="PTHR30100">
    <property type="entry name" value="FATTY ACID/PHOSPHOLIPID SYNTHESIS PROTEIN PLSX"/>
    <property type="match status" value="1"/>
</dbReference>
<dbReference type="PANTHER" id="PTHR30100:SF1">
    <property type="entry name" value="PHOSPHATE ACYLTRANSFERASE"/>
    <property type="match status" value="1"/>
</dbReference>
<dbReference type="Pfam" id="PF02504">
    <property type="entry name" value="FA_synthesis"/>
    <property type="match status" value="1"/>
</dbReference>
<dbReference type="PIRSF" id="PIRSF002465">
    <property type="entry name" value="Phsphlp_syn_PlsX"/>
    <property type="match status" value="1"/>
</dbReference>
<dbReference type="SUPFAM" id="SSF53659">
    <property type="entry name" value="Isocitrate/Isopropylmalate dehydrogenase-like"/>
    <property type="match status" value="1"/>
</dbReference>
<proteinExistence type="inferred from homology"/>
<name>PLSX_CAMJR</name>
<comment type="function">
    <text evidence="1">Catalyzes the reversible formation of acyl-phosphate (acyl-PO(4)) from acyl-[acyl-carrier-protein] (acyl-ACP). This enzyme utilizes acyl-ACP as fatty acyl donor, but not acyl-CoA.</text>
</comment>
<comment type="catalytic activity">
    <reaction evidence="1">
        <text>a fatty acyl-[ACP] + phosphate = an acyl phosphate + holo-[ACP]</text>
        <dbReference type="Rhea" id="RHEA:42292"/>
        <dbReference type="Rhea" id="RHEA-COMP:9685"/>
        <dbReference type="Rhea" id="RHEA-COMP:14125"/>
        <dbReference type="ChEBI" id="CHEBI:43474"/>
        <dbReference type="ChEBI" id="CHEBI:59918"/>
        <dbReference type="ChEBI" id="CHEBI:64479"/>
        <dbReference type="ChEBI" id="CHEBI:138651"/>
        <dbReference type="EC" id="2.3.1.274"/>
    </reaction>
</comment>
<comment type="pathway">
    <text evidence="1">Lipid metabolism; phospholipid metabolism.</text>
</comment>
<comment type="subunit">
    <text evidence="1">Homodimer. Probably interacts with PlsY.</text>
</comment>
<comment type="subcellular location">
    <subcellularLocation>
        <location evidence="1">Cytoplasm</location>
    </subcellularLocation>
    <text evidence="1">Associated with the membrane possibly through PlsY.</text>
</comment>
<comment type="similarity">
    <text evidence="1">Belongs to the PlsX family.</text>
</comment>
<feature type="chain" id="PRO_0000189859" description="Phosphate acyltransferase">
    <location>
        <begin position="1"/>
        <end position="328"/>
    </location>
</feature>
<accession>Q5HWE2</accession>
<reference key="1">
    <citation type="journal article" date="2005" name="PLoS Biol.">
        <title>Major structural differences and novel potential virulence mechanisms from the genomes of multiple Campylobacter species.</title>
        <authorList>
            <person name="Fouts D.E."/>
            <person name="Mongodin E.F."/>
            <person name="Mandrell R.E."/>
            <person name="Miller W.G."/>
            <person name="Rasko D.A."/>
            <person name="Ravel J."/>
            <person name="Brinkac L.M."/>
            <person name="DeBoy R.T."/>
            <person name="Parker C.T."/>
            <person name="Daugherty S.C."/>
            <person name="Dodson R.J."/>
            <person name="Durkin A.S."/>
            <person name="Madupu R."/>
            <person name="Sullivan S.A."/>
            <person name="Shetty J.U."/>
            <person name="Ayodeji M.A."/>
            <person name="Shvartsbeyn A."/>
            <person name="Schatz M.C."/>
            <person name="Badger J.H."/>
            <person name="Fraser C.M."/>
            <person name="Nelson K.E."/>
        </authorList>
    </citation>
    <scope>NUCLEOTIDE SEQUENCE [LARGE SCALE GENOMIC DNA]</scope>
    <source>
        <strain>RM1221</strain>
    </source>
</reference>
<keyword id="KW-0963">Cytoplasm</keyword>
<keyword id="KW-0444">Lipid biosynthesis</keyword>
<keyword id="KW-0443">Lipid metabolism</keyword>
<keyword id="KW-0594">Phospholipid biosynthesis</keyword>
<keyword id="KW-1208">Phospholipid metabolism</keyword>
<keyword id="KW-0808">Transferase</keyword>